<evidence type="ECO:0000255" key="1">
    <source>
        <dbReference type="HAMAP-Rule" id="MF_00051"/>
    </source>
</evidence>
<feature type="chain" id="PRO_0000235027" description="Serine hydroxymethyltransferase">
    <location>
        <begin position="1"/>
        <end position="412"/>
    </location>
</feature>
<feature type="binding site" evidence="1">
    <location>
        <position position="117"/>
    </location>
    <ligand>
        <name>(6S)-5,6,7,8-tetrahydrofolate</name>
        <dbReference type="ChEBI" id="CHEBI:57453"/>
    </ligand>
</feature>
<feature type="binding site" evidence="1">
    <location>
        <begin position="121"/>
        <end position="123"/>
    </location>
    <ligand>
        <name>(6S)-5,6,7,8-tetrahydrofolate</name>
        <dbReference type="ChEBI" id="CHEBI:57453"/>
    </ligand>
</feature>
<feature type="site" description="Plays an important role in substrate specificity" evidence="1">
    <location>
        <position position="225"/>
    </location>
</feature>
<feature type="modified residue" description="N6-(pyridoxal phosphate)lysine" evidence="1">
    <location>
        <position position="226"/>
    </location>
</feature>
<organism>
    <name type="scientific">Staphylococcus aureus (strain USA300)</name>
    <dbReference type="NCBI Taxonomy" id="367830"/>
    <lineage>
        <taxon>Bacteria</taxon>
        <taxon>Bacillati</taxon>
        <taxon>Bacillota</taxon>
        <taxon>Bacilli</taxon>
        <taxon>Bacillales</taxon>
        <taxon>Staphylococcaceae</taxon>
        <taxon>Staphylococcus</taxon>
    </lineage>
</organism>
<sequence>MSYITKQDKVIAEAIEREFQRQNSNIELIASENFVSEAVMEAQGSVLTNKYAEGYPGRRYYGGCEFVDVTESIAIDRAKALFGAEHVNVQPHSGSQANMAVYLVALGMGDTVLGMNLSHGGHLTHGAPVNFSGKFYNFVEYGVDKDTERINYDEVRKLALEHKPKLIVAGASAYSRTIDFKKFKEIADEVNAKLMVDMAHIAGLVAAGLHPNPVEYADFVTTTTHKTLRGPRGGMILCKEEYKKDIDKTIFPGIQGGPLEHVIAAKAVAFGEALENNFKTYQQQVVKNAKVLAEALINEGFRIVSGGTDNHLVAVDVKGSIGLTGKEAEETLDSVGITCNKNTIPFDQEKPFVTSGIRLGTPAATTRGFDEKAFEEVAKIISLALKNSKDEEKLQQAKERVAKLTAEYPLYQ</sequence>
<name>GLYA_STAA3</name>
<comment type="function">
    <text evidence="1">Catalyzes the reversible interconversion of serine and glycine with tetrahydrofolate (THF) serving as the one-carbon carrier. This reaction serves as the major source of one-carbon groups required for the biosynthesis of purines, thymidylate, methionine, and other important biomolecules. Also exhibits THF-independent aldolase activity toward beta-hydroxyamino acids, producing glycine and aldehydes, via a retro-aldol mechanism.</text>
</comment>
<comment type="catalytic activity">
    <reaction evidence="1">
        <text>(6R)-5,10-methylene-5,6,7,8-tetrahydrofolate + glycine + H2O = (6S)-5,6,7,8-tetrahydrofolate + L-serine</text>
        <dbReference type="Rhea" id="RHEA:15481"/>
        <dbReference type="ChEBI" id="CHEBI:15377"/>
        <dbReference type="ChEBI" id="CHEBI:15636"/>
        <dbReference type="ChEBI" id="CHEBI:33384"/>
        <dbReference type="ChEBI" id="CHEBI:57305"/>
        <dbReference type="ChEBI" id="CHEBI:57453"/>
        <dbReference type="EC" id="2.1.2.1"/>
    </reaction>
</comment>
<comment type="cofactor">
    <cofactor evidence="1">
        <name>pyridoxal 5'-phosphate</name>
        <dbReference type="ChEBI" id="CHEBI:597326"/>
    </cofactor>
</comment>
<comment type="pathway">
    <text evidence="1">One-carbon metabolism; tetrahydrofolate interconversion.</text>
</comment>
<comment type="pathway">
    <text evidence="1">Amino-acid biosynthesis; glycine biosynthesis; glycine from L-serine: step 1/1.</text>
</comment>
<comment type="subunit">
    <text evidence="1">Homodimer.</text>
</comment>
<comment type="subcellular location">
    <subcellularLocation>
        <location evidence="1">Cytoplasm</location>
    </subcellularLocation>
</comment>
<comment type="similarity">
    <text evidence="1">Belongs to the SHMT family.</text>
</comment>
<protein>
    <recommendedName>
        <fullName evidence="1">Serine hydroxymethyltransferase</fullName>
        <shortName evidence="1">SHMT</shortName>
        <shortName evidence="1">Serine methylase</shortName>
        <ecNumber evidence="1">2.1.2.1</ecNumber>
    </recommendedName>
</protein>
<gene>
    <name evidence="1" type="primary">glyA</name>
    <name type="ordered locus">SAUSA300_2067</name>
</gene>
<accession>Q2FF15</accession>
<reference key="1">
    <citation type="journal article" date="2006" name="Lancet">
        <title>Complete genome sequence of USA300, an epidemic clone of community-acquired meticillin-resistant Staphylococcus aureus.</title>
        <authorList>
            <person name="Diep B.A."/>
            <person name="Gill S.R."/>
            <person name="Chang R.F."/>
            <person name="Phan T.H."/>
            <person name="Chen J.H."/>
            <person name="Davidson M.G."/>
            <person name="Lin F."/>
            <person name="Lin J."/>
            <person name="Carleton H.A."/>
            <person name="Mongodin E.F."/>
            <person name="Sensabaugh G.F."/>
            <person name="Perdreau-Remington F."/>
        </authorList>
    </citation>
    <scope>NUCLEOTIDE SEQUENCE [LARGE SCALE GENOMIC DNA]</scope>
    <source>
        <strain>USA300</strain>
    </source>
</reference>
<keyword id="KW-0028">Amino-acid biosynthesis</keyword>
<keyword id="KW-0963">Cytoplasm</keyword>
<keyword id="KW-0554">One-carbon metabolism</keyword>
<keyword id="KW-0663">Pyridoxal phosphate</keyword>
<keyword id="KW-0808">Transferase</keyword>
<dbReference type="EC" id="2.1.2.1" evidence="1"/>
<dbReference type="EMBL" id="CP000255">
    <property type="protein sequence ID" value="ABD21824.1"/>
    <property type="molecule type" value="Genomic_DNA"/>
</dbReference>
<dbReference type="RefSeq" id="WP_000120500.1">
    <property type="nucleotide sequence ID" value="NZ_CP027476.1"/>
</dbReference>
<dbReference type="SMR" id="Q2FF15"/>
<dbReference type="KEGG" id="saa:SAUSA300_2067"/>
<dbReference type="HOGENOM" id="CLU_022477_2_1_9"/>
<dbReference type="OMA" id="CQFANVQ"/>
<dbReference type="UniPathway" id="UPA00193"/>
<dbReference type="UniPathway" id="UPA00288">
    <property type="reaction ID" value="UER01023"/>
</dbReference>
<dbReference type="Proteomes" id="UP000001939">
    <property type="component" value="Chromosome"/>
</dbReference>
<dbReference type="GO" id="GO:0005829">
    <property type="term" value="C:cytosol"/>
    <property type="evidence" value="ECO:0007669"/>
    <property type="project" value="TreeGrafter"/>
</dbReference>
<dbReference type="GO" id="GO:0004372">
    <property type="term" value="F:glycine hydroxymethyltransferase activity"/>
    <property type="evidence" value="ECO:0007669"/>
    <property type="project" value="UniProtKB-UniRule"/>
</dbReference>
<dbReference type="GO" id="GO:0030170">
    <property type="term" value="F:pyridoxal phosphate binding"/>
    <property type="evidence" value="ECO:0007669"/>
    <property type="project" value="UniProtKB-UniRule"/>
</dbReference>
<dbReference type="GO" id="GO:0019264">
    <property type="term" value="P:glycine biosynthetic process from serine"/>
    <property type="evidence" value="ECO:0007669"/>
    <property type="project" value="UniProtKB-UniRule"/>
</dbReference>
<dbReference type="GO" id="GO:0035999">
    <property type="term" value="P:tetrahydrofolate interconversion"/>
    <property type="evidence" value="ECO:0007669"/>
    <property type="project" value="UniProtKB-UniRule"/>
</dbReference>
<dbReference type="CDD" id="cd00378">
    <property type="entry name" value="SHMT"/>
    <property type="match status" value="1"/>
</dbReference>
<dbReference type="FunFam" id="3.40.640.10:FF:000001">
    <property type="entry name" value="Serine hydroxymethyltransferase"/>
    <property type="match status" value="1"/>
</dbReference>
<dbReference type="FunFam" id="3.90.1150.10:FF:000003">
    <property type="entry name" value="Serine hydroxymethyltransferase"/>
    <property type="match status" value="1"/>
</dbReference>
<dbReference type="Gene3D" id="3.90.1150.10">
    <property type="entry name" value="Aspartate Aminotransferase, domain 1"/>
    <property type="match status" value="1"/>
</dbReference>
<dbReference type="Gene3D" id="3.40.640.10">
    <property type="entry name" value="Type I PLP-dependent aspartate aminotransferase-like (Major domain)"/>
    <property type="match status" value="1"/>
</dbReference>
<dbReference type="HAMAP" id="MF_00051">
    <property type="entry name" value="SHMT"/>
    <property type="match status" value="1"/>
</dbReference>
<dbReference type="InterPro" id="IPR015424">
    <property type="entry name" value="PyrdxlP-dep_Trfase"/>
</dbReference>
<dbReference type="InterPro" id="IPR015421">
    <property type="entry name" value="PyrdxlP-dep_Trfase_major"/>
</dbReference>
<dbReference type="InterPro" id="IPR015422">
    <property type="entry name" value="PyrdxlP-dep_Trfase_small"/>
</dbReference>
<dbReference type="InterPro" id="IPR001085">
    <property type="entry name" value="Ser_HO-MeTrfase"/>
</dbReference>
<dbReference type="InterPro" id="IPR049943">
    <property type="entry name" value="Ser_HO-MeTrfase-like"/>
</dbReference>
<dbReference type="InterPro" id="IPR019798">
    <property type="entry name" value="Ser_HO-MeTrfase_PLP_BS"/>
</dbReference>
<dbReference type="InterPro" id="IPR039429">
    <property type="entry name" value="SHMT-like_dom"/>
</dbReference>
<dbReference type="NCBIfam" id="NF000586">
    <property type="entry name" value="PRK00011.1"/>
    <property type="match status" value="1"/>
</dbReference>
<dbReference type="PANTHER" id="PTHR11680">
    <property type="entry name" value="SERINE HYDROXYMETHYLTRANSFERASE"/>
    <property type="match status" value="1"/>
</dbReference>
<dbReference type="PANTHER" id="PTHR11680:SF35">
    <property type="entry name" value="SERINE HYDROXYMETHYLTRANSFERASE 1"/>
    <property type="match status" value="1"/>
</dbReference>
<dbReference type="Pfam" id="PF00464">
    <property type="entry name" value="SHMT"/>
    <property type="match status" value="1"/>
</dbReference>
<dbReference type="PIRSF" id="PIRSF000412">
    <property type="entry name" value="SHMT"/>
    <property type="match status" value="1"/>
</dbReference>
<dbReference type="SUPFAM" id="SSF53383">
    <property type="entry name" value="PLP-dependent transferases"/>
    <property type="match status" value="1"/>
</dbReference>
<dbReference type="PROSITE" id="PS00096">
    <property type="entry name" value="SHMT"/>
    <property type="match status" value="1"/>
</dbReference>
<proteinExistence type="inferred from homology"/>